<proteinExistence type="inferred from homology"/>
<evidence type="ECO:0000255" key="1">
    <source>
        <dbReference type="HAMAP-Rule" id="MF_00057"/>
    </source>
</evidence>
<dbReference type="EC" id="2.7.7.38" evidence="1"/>
<dbReference type="EMBL" id="CP000685">
    <property type="protein sequence ID" value="ABQ07512.1"/>
    <property type="molecule type" value="Genomic_DNA"/>
</dbReference>
<dbReference type="RefSeq" id="WP_012026478.1">
    <property type="nucleotide sequence ID" value="NC_009441.1"/>
</dbReference>
<dbReference type="SMR" id="A5FBA3"/>
<dbReference type="STRING" id="376686.Fjoh_4513"/>
<dbReference type="KEGG" id="fjo:Fjoh_4513"/>
<dbReference type="eggNOG" id="COG1212">
    <property type="taxonomic scope" value="Bacteria"/>
</dbReference>
<dbReference type="HOGENOM" id="CLU_065038_0_1_10"/>
<dbReference type="OrthoDB" id="9815559at2"/>
<dbReference type="UniPathway" id="UPA00030"/>
<dbReference type="UniPathway" id="UPA00358">
    <property type="reaction ID" value="UER00476"/>
</dbReference>
<dbReference type="Proteomes" id="UP000006694">
    <property type="component" value="Chromosome"/>
</dbReference>
<dbReference type="GO" id="GO:0005829">
    <property type="term" value="C:cytosol"/>
    <property type="evidence" value="ECO:0007669"/>
    <property type="project" value="TreeGrafter"/>
</dbReference>
<dbReference type="GO" id="GO:0008690">
    <property type="term" value="F:3-deoxy-manno-octulosonate cytidylyltransferase activity"/>
    <property type="evidence" value="ECO:0007669"/>
    <property type="project" value="UniProtKB-UniRule"/>
</dbReference>
<dbReference type="GO" id="GO:0033468">
    <property type="term" value="P:CMP-keto-3-deoxy-D-manno-octulosonic acid biosynthetic process"/>
    <property type="evidence" value="ECO:0007669"/>
    <property type="project" value="UniProtKB-UniRule"/>
</dbReference>
<dbReference type="GO" id="GO:0009103">
    <property type="term" value="P:lipopolysaccharide biosynthetic process"/>
    <property type="evidence" value="ECO:0007669"/>
    <property type="project" value="UniProtKB-UniRule"/>
</dbReference>
<dbReference type="CDD" id="cd02517">
    <property type="entry name" value="CMP-KDO-Synthetase"/>
    <property type="match status" value="1"/>
</dbReference>
<dbReference type="Gene3D" id="3.90.550.10">
    <property type="entry name" value="Spore Coat Polysaccharide Biosynthesis Protein SpsA, Chain A"/>
    <property type="match status" value="1"/>
</dbReference>
<dbReference type="HAMAP" id="MF_00057">
    <property type="entry name" value="KdsB"/>
    <property type="match status" value="1"/>
</dbReference>
<dbReference type="InterPro" id="IPR003329">
    <property type="entry name" value="Cytidylyl_trans"/>
</dbReference>
<dbReference type="InterPro" id="IPR004528">
    <property type="entry name" value="KdsB"/>
</dbReference>
<dbReference type="InterPro" id="IPR029044">
    <property type="entry name" value="Nucleotide-diphossugar_trans"/>
</dbReference>
<dbReference type="NCBIfam" id="TIGR00466">
    <property type="entry name" value="kdsB"/>
    <property type="match status" value="1"/>
</dbReference>
<dbReference type="NCBIfam" id="NF003950">
    <property type="entry name" value="PRK05450.1-3"/>
    <property type="match status" value="1"/>
</dbReference>
<dbReference type="NCBIfam" id="NF003952">
    <property type="entry name" value="PRK05450.1-5"/>
    <property type="match status" value="1"/>
</dbReference>
<dbReference type="NCBIfam" id="NF009905">
    <property type="entry name" value="PRK13368.1"/>
    <property type="match status" value="1"/>
</dbReference>
<dbReference type="PANTHER" id="PTHR42866">
    <property type="entry name" value="3-DEOXY-MANNO-OCTULOSONATE CYTIDYLYLTRANSFERASE"/>
    <property type="match status" value="1"/>
</dbReference>
<dbReference type="PANTHER" id="PTHR42866:SF2">
    <property type="entry name" value="3-DEOXY-MANNO-OCTULOSONATE CYTIDYLYLTRANSFERASE, MITOCHONDRIAL"/>
    <property type="match status" value="1"/>
</dbReference>
<dbReference type="Pfam" id="PF02348">
    <property type="entry name" value="CTP_transf_3"/>
    <property type="match status" value="1"/>
</dbReference>
<dbReference type="SUPFAM" id="SSF53448">
    <property type="entry name" value="Nucleotide-diphospho-sugar transferases"/>
    <property type="match status" value="1"/>
</dbReference>
<name>KDSB_FLAJ1</name>
<comment type="function">
    <text evidence="1">Activates KDO (a required 8-carbon sugar) for incorporation into bacterial lipopolysaccharide in Gram-negative bacteria.</text>
</comment>
<comment type="catalytic activity">
    <reaction evidence="1">
        <text>3-deoxy-alpha-D-manno-oct-2-ulosonate + CTP = CMP-3-deoxy-beta-D-manno-octulosonate + diphosphate</text>
        <dbReference type="Rhea" id="RHEA:23448"/>
        <dbReference type="ChEBI" id="CHEBI:33019"/>
        <dbReference type="ChEBI" id="CHEBI:37563"/>
        <dbReference type="ChEBI" id="CHEBI:85986"/>
        <dbReference type="ChEBI" id="CHEBI:85987"/>
        <dbReference type="EC" id="2.7.7.38"/>
    </reaction>
</comment>
<comment type="pathway">
    <text evidence="1">Nucleotide-sugar biosynthesis; CMP-3-deoxy-D-manno-octulosonate biosynthesis; CMP-3-deoxy-D-manno-octulosonate from 3-deoxy-D-manno-octulosonate and CTP: step 1/1.</text>
</comment>
<comment type="pathway">
    <text evidence="1">Bacterial outer membrane biogenesis; lipopolysaccharide biosynthesis.</text>
</comment>
<comment type="subcellular location">
    <subcellularLocation>
        <location evidence="1">Cytoplasm</location>
    </subcellularLocation>
</comment>
<comment type="similarity">
    <text evidence="1">Belongs to the KdsB family.</text>
</comment>
<keyword id="KW-0963">Cytoplasm</keyword>
<keyword id="KW-0448">Lipopolysaccharide biosynthesis</keyword>
<keyword id="KW-0548">Nucleotidyltransferase</keyword>
<keyword id="KW-0808">Transferase</keyword>
<organism>
    <name type="scientific">Flavobacterium johnsoniae (strain ATCC 17061 / DSM 2064 / JCM 8514 / BCRC 14874 / CCUG 350202 / NBRC 14942 / NCIMB 11054 / UW101)</name>
    <name type="common">Cytophaga johnsonae</name>
    <dbReference type="NCBI Taxonomy" id="376686"/>
    <lineage>
        <taxon>Bacteria</taxon>
        <taxon>Pseudomonadati</taxon>
        <taxon>Bacteroidota</taxon>
        <taxon>Flavobacteriia</taxon>
        <taxon>Flavobacteriales</taxon>
        <taxon>Flavobacteriaceae</taxon>
        <taxon>Flavobacterium</taxon>
    </lineage>
</organism>
<accession>A5FBA3</accession>
<feature type="chain" id="PRO_1000116889" description="3-deoxy-manno-octulosonate cytidylyltransferase">
    <location>
        <begin position="1"/>
        <end position="244"/>
    </location>
</feature>
<protein>
    <recommendedName>
        <fullName evidence="1">3-deoxy-manno-octulosonate cytidylyltransferase</fullName>
        <ecNumber evidence="1">2.7.7.38</ecNumber>
    </recommendedName>
    <alternativeName>
        <fullName evidence="1">CMP-2-keto-3-deoxyoctulosonic acid synthase</fullName>
        <shortName evidence="1">CKS</shortName>
        <shortName evidence="1">CMP-KDO synthase</shortName>
    </alternativeName>
</protein>
<sequence>MKIIAVIPARYASTRFPAKLMQDLGGKTVILRTYEAAVSTKLFDDVFVVTDSDLIFDEIVSNGGKAIMSIKEHESGSDRIAEAVANLDVDIVVNVQGDEPFTEAGPLEQVLSVFKNDPDKKIDLASLMREITNEDEINNPNNVKVVVDQSQFALYFSRSVIPYPREKDAGVRYFQHIGIYAFRKQALLDFYSLPMKSLEASEKLEQLRYLEFGKRIKMVETTHVGIGIDTAEDLERARAMLRDI</sequence>
<reference key="1">
    <citation type="journal article" date="2009" name="Appl. Environ. Microbiol.">
        <title>Novel features of the polysaccharide-digesting gliding bacterium Flavobacterium johnsoniae as revealed by genome sequence analysis.</title>
        <authorList>
            <person name="McBride M.J."/>
            <person name="Xie G."/>
            <person name="Martens E.C."/>
            <person name="Lapidus A."/>
            <person name="Henrissat B."/>
            <person name="Rhodes R.G."/>
            <person name="Goltsman E."/>
            <person name="Wang W."/>
            <person name="Xu J."/>
            <person name="Hunnicutt D.W."/>
            <person name="Staroscik A.M."/>
            <person name="Hoover T.R."/>
            <person name="Cheng Y.Q."/>
            <person name="Stein J.L."/>
        </authorList>
    </citation>
    <scope>NUCLEOTIDE SEQUENCE [LARGE SCALE GENOMIC DNA]</scope>
    <source>
        <strain>ATCC 17061 / DSM 2064 / JCM 8514 / BCRC 14874 / CCUG 350202 / NBRC 14942 / NCIMB 11054 / UW101</strain>
    </source>
</reference>
<gene>
    <name evidence="1" type="primary">kdsB</name>
    <name type="ordered locus">Fjoh_4513</name>
</gene>